<accession>B5XIJ1</accession>
<name>RS9_STRPZ</name>
<organism>
    <name type="scientific">Streptococcus pyogenes serotype M49 (strain NZ131)</name>
    <dbReference type="NCBI Taxonomy" id="471876"/>
    <lineage>
        <taxon>Bacteria</taxon>
        <taxon>Bacillati</taxon>
        <taxon>Bacillota</taxon>
        <taxon>Bacilli</taxon>
        <taxon>Lactobacillales</taxon>
        <taxon>Streptococcaceae</taxon>
        <taxon>Streptococcus</taxon>
    </lineage>
</organism>
<gene>
    <name evidence="1" type="primary">rpsI</name>
    <name type="ordered locus">Spy49_1595c</name>
</gene>
<comment type="similarity">
    <text evidence="1">Belongs to the universal ribosomal protein uS9 family.</text>
</comment>
<reference key="1">
    <citation type="journal article" date="2008" name="J. Bacteriol.">
        <title>Genome sequence of a nephritogenic and highly transformable M49 strain of Streptococcus pyogenes.</title>
        <authorList>
            <person name="McShan W.M."/>
            <person name="Ferretti J.J."/>
            <person name="Karasawa T."/>
            <person name="Suvorov A.N."/>
            <person name="Lin S."/>
            <person name="Qin B."/>
            <person name="Jia H."/>
            <person name="Kenton S."/>
            <person name="Najar F."/>
            <person name="Wu H."/>
            <person name="Scott J."/>
            <person name="Roe B.A."/>
            <person name="Savic D.J."/>
        </authorList>
    </citation>
    <scope>NUCLEOTIDE SEQUENCE [LARGE SCALE GENOMIC DNA]</scope>
    <source>
        <strain>NZ131</strain>
    </source>
</reference>
<dbReference type="EMBL" id="CP000829">
    <property type="protein sequence ID" value="ACI61853.1"/>
    <property type="molecule type" value="Genomic_DNA"/>
</dbReference>
<dbReference type="SMR" id="B5XIJ1"/>
<dbReference type="KEGG" id="soz:Spy49_1595c"/>
<dbReference type="HOGENOM" id="CLU_046483_2_1_9"/>
<dbReference type="Proteomes" id="UP000001039">
    <property type="component" value="Chromosome"/>
</dbReference>
<dbReference type="GO" id="GO:0022627">
    <property type="term" value="C:cytosolic small ribosomal subunit"/>
    <property type="evidence" value="ECO:0007669"/>
    <property type="project" value="TreeGrafter"/>
</dbReference>
<dbReference type="GO" id="GO:0003723">
    <property type="term" value="F:RNA binding"/>
    <property type="evidence" value="ECO:0007669"/>
    <property type="project" value="TreeGrafter"/>
</dbReference>
<dbReference type="GO" id="GO:0003735">
    <property type="term" value="F:structural constituent of ribosome"/>
    <property type="evidence" value="ECO:0007669"/>
    <property type="project" value="InterPro"/>
</dbReference>
<dbReference type="GO" id="GO:0006412">
    <property type="term" value="P:translation"/>
    <property type="evidence" value="ECO:0007669"/>
    <property type="project" value="UniProtKB-UniRule"/>
</dbReference>
<dbReference type="FunFam" id="3.30.230.10:FF:000001">
    <property type="entry name" value="30S ribosomal protein S9"/>
    <property type="match status" value="1"/>
</dbReference>
<dbReference type="Gene3D" id="3.30.230.10">
    <property type="match status" value="1"/>
</dbReference>
<dbReference type="HAMAP" id="MF_00532_B">
    <property type="entry name" value="Ribosomal_uS9_B"/>
    <property type="match status" value="1"/>
</dbReference>
<dbReference type="InterPro" id="IPR020568">
    <property type="entry name" value="Ribosomal_Su5_D2-typ_SF"/>
</dbReference>
<dbReference type="InterPro" id="IPR000754">
    <property type="entry name" value="Ribosomal_uS9"/>
</dbReference>
<dbReference type="InterPro" id="IPR023035">
    <property type="entry name" value="Ribosomal_uS9_bac/plastid"/>
</dbReference>
<dbReference type="InterPro" id="IPR020574">
    <property type="entry name" value="Ribosomal_uS9_CS"/>
</dbReference>
<dbReference type="InterPro" id="IPR014721">
    <property type="entry name" value="Ribsml_uS5_D2-typ_fold_subgr"/>
</dbReference>
<dbReference type="NCBIfam" id="NF001099">
    <property type="entry name" value="PRK00132.1"/>
    <property type="match status" value="1"/>
</dbReference>
<dbReference type="PANTHER" id="PTHR21569">
    <property type="entry name" value="RIBOSOMAL PROTEIN S9"/>
    <property type="match status" value="1"/>
</dbReference>
<dbReference type="PANTHER" id="PTHR21569:SF1">
    <property type="entry name" value="SMALL RIBOSOMAL SUBUNIT PROTEIN US9M"/>
    <property type="match status" value="1"/>
</dbReference>
<dbReference type="Pfam" id="PF00380">
    <property type="entry name" value="Ribosomal_S9"/>
    <property type="match status" value="1"/>
</dbReference>
<dbReference type="SUPFAM" id="SSF54211">
    <property type="entry name" value="Ribosomal protein S5 domain 2-like"/>
    <property type="match status" value="1"/>
</dbReference>
<dbReference type="PROSITE" id="PS00360">
    <property type="entry name" value="RIBOSOMAL_S9"/>
    <property type="match status" value="1"/>
</dbReference>
<evidence type="ECO:0000255" key="1">
    <source>
        <dbReference type="HAMAP-Rule" id="MF_00532"/>
    </source>
</evidence>
<evidence type="ECO:0000305" key="2"/>
<sequence length="130" mass="14235">MAQAQYAGTGRRKNAVARVRLVPGTGKITVNKKDVEEYIPHADLRLIINQPFAVTSTEGSYDVFVNVVGGGYGGQSGAIRHGIARALLQVDPDFRDSLKRAGLLTRDARMVERKKPGLKKARKASQFSKR</sequence>
<protein>
    <recommendedName>
        <fullName evidence="1">Small ribosomal subunit protein uS9</fullName>
    </recommendedName>
    <alternativeName>
        <fullName evidence="2">30S ribosomal protein S9</fullName>
    </alternativeName>
</protein>
<keyword id="KW-0687">Ribonucleoprotein</keyword>
<keyword id="KW-0689">Ribosomal protein</keyword>
<proteinExistence type="inferred from homology"/>
<feature type="chain" id="PRO_1000128184" description="Small ribosomal subunit protein uS9">
    <location>
        <begin position="1"/>
        <end position="130"/>
    </location>
</feature>